<sequence>MRVDLNCDLGEAFGNYFFGGDHQIIPLITSANVACGFHAGDENVMNETVKLAKAHNVAVGAHPGLPDLKGFGRRNIDISNEEIYNLMIYQLGALQGFCRIHQVKINHVKPHGALYQMGAKDREIASVIAQAVYDFDPSLVLVGLANSYLISEAKNVGLITASEVFADRRYEDDGQLVSRKESDAVITDTDEALKQVLKMVKENKVISKNNKEVTLQADTICVHGDGEHALLFVSKIREILMKEGIDIQSL</sequence>
<keyword id="KW-0067">ATP-binding</keyword>
<keyword id="KW-0378">Hydrolase</keyword>
<keyword id="KW-0547">Nucleotide-binding</keyword>
<protein>
    <recommendedName>
        <fullName evidence="1">5-oxoprolinase subunit A</fullName>
        <shortName evidence="1">5-OPase subunit A</shortName>
        <ecNumber evidence="1">3.5.2.9</ecNumber>
    </recommendedName>
    <alternativeName>
        <fullName evidence="1">5-oxoprolinase (ATP-hydrolyzing) subunit A</fullName>
    </alternativeName>
</protein>
<gene>
    <name evidence="1" type="primary">pxpA</name>
    <name type="ordered locus">SAR1684</name>
</gene>
<dbReference type="EC" id="3.5.2.9" evidence="1"/>
<dbReference type="EMBL" id="BX571856">
    <property type="protein sequence ID" value="CAG40676.1"/>
    <property type="molecule type" value="Genomic_DNA"/>
</dbReference>
<dbReference type="RefSeq" id="WP_001261792.1">
    <property type="nucleotide sequence ID" value="NC_002952.2"/>
</dbReference>
<dbReference type="SMR" id="Q6GG98"/>
<dbReference type="KEGG" id="sar:SAR1684"/>
<dbReference type="HOGENOM" id="CLU_069535_0_0_9"/>
<dbReference type="Proteomes" id="UP000000596">
    <property type="component" value="Chromosome"/>
</dbReference>
<dbReference type="GO" id="GO:0017168">
    <property type="term" value="F:5-oxoprolinase (ATP-hydrolyzing) activity"/>
    <property type="evidence" value="ECO:0007669"/>
    <property type="project" value="UniProtKB-UniRule"/>
</dbReference>
<dbReference type="GO" id="GO:0005524">
    <property type="term" value="F:ATP binding"/>
    <property type="evidence" value="ECO:0007669"/>
    <property type="project" value="UniProtKB-UniRule"/>
</dbReference>
<dbReference type="GO" id="GO:0005975">
    <property type="term" value="P:carbohydrate metabolic process"/>
    <property type="evidence" value="ECO:0007669"/>
    <property type="project" value="InterPro"/>
</dbReference>
<dbReference type="CDD" id="cd10787">
    <property type="entry name" value="LamB_YcsF_like"/>
    <property type="match status" value="1"/>
</dbReference>
<dbReference type="Gene3D" id="3.20.20.370">
    <property type="entry name" value="Glycoside hydrolase/deacetylase"/>
    <property type="match status" value="1"/>
</dbReference>
<dbReference type="HAMAP" id="MF_00691">
    <property type="entry name" value="PxpA"/>
    <property type="match status" value="1"/>
</dbReference>
<dbReference type="InterPro" id="IPR011330">
    <property type="entry name" value="Glyco_hydro/deAcase_b/a-brl"/>
</dbReference>
<dbReference type="InterPro" id="IPR005501">
    <property type="entry name" value="LamB/YcsF/PxpA-like"/>
</dbReference>
<dbReference type="NCBIfam" id="NF003813">
    <property type="entry name" value="PRK05406.1-2"/>
    <property type="match status" value="1"/>
</dbReference>
<dbReference type="NCBIfam" id="NF003814">
    <property type="entry name" value="PRK05406.1-3"/>
    <property type="match status" value="1"/>
</dbReference>
<dbReference type="NCBIfam" id="NF003816">
    <property type="entry name" value="PRK05406.1-5"/>
    <property type="match status" value="1"/>
</dbReference>
<dbReference type="PANTHER" id="PTHR30292:SF0">
    <property type="entry name" value="5-OXOPROLINASE SUBUNIT A"/>
    <property type="match status" value="1"/>
</dbReference>
<dbReference type="PANTHER" id="PTHR30292">
    <property type="entry name" value="UNCHARACTERIZED PROTEIN YBGL-RELATED"/>
    <property type="match status" value="1"/>
</dbReference>
<dbReference type="Pfam" id="PF03746">
    <property type="entry name" value="LamB_YcsF"/>
    <property type="match status" value="1"/>
</dbReference>
<dbReference type="SUPFAM" id="SSF88713">
    <property type="entry name" value="Glycoside hydrolase/deacetylase"/>
    <property type="match status" value="1"/>
</dbReference>
<accession>Q6GG98</accession>
<proteinExistence type="inferred from homology"/>
<evidence type="ECO:0000255" key="1">
    <source>
        <dbReference type="HAMAP-Rule" id="MF_00691"/>
    </source>
</evidence>
<organism>
    <name type="scientific">Staphylococcus aureus (strain MRSA252)</name>
    <dbReference type="NCBI Taxonomy" id="282458"/>
    <lineage>
        <taxon>Bacteria</taxon>
        <taxon>Bacillati</taxon>
        <taxon>Bacillota</taxon>
        <taxon>Bacilli</taxon>
        <taxon>Bacillales</taxon>
        <taxon>Staphylococcaceae</taxon>
        <taxon>Staphylococcus</taxon>
    </lineage>
</organism>
<comment type="function">
    <text evidence="1">Catalyzes the cleavage of 5-oxoproline to form L-glutamate coupled to the hydrolysis of ATP to ADP and inorganic phosphate.</text>
</comment>
<comment type="catalytic activity">
    <reaction evidence="1">
        <text>5-oxo-L-proline + ATP + 2 H2O = L-glutamate + ADP + phosphate + H(+)</text>
        <dbReference type="Rhea" id="RHEA:10348"/>
        <dbReference type="ChEBI" id="CHEBI:15377"/>
        <dbReference type="ChEBI" id="CHEBI:15378"/>
        <dbReference type="ChEBI" id="CHEBI:29985"/>
        <dbReference type="ChEBI" id="CHEBI:30616"/>
        <dbReference type="ChEBI" id="CHEBI:43474"/>
        <dbReference type="ChEBI" id="CHEBI:58402"/>
        <dbReference type="ChEBI" id="CHEBI:456216"/>
        <dbReference type="EC" id="3.5.2.9"/>
    </reaction>
</comment>
<comment type="subunit">
    <text evidence="1">Forms a complex composed of PxpA, PxpB and PxpC.</text>
</comment>
<comment type="similarity">
    <text evidence="1">Belongs to the LamB/PxpA family.</text>
</comment>
<feature type="chain" id="PRO_0000185046" description="5-oxoprolinase subunit A">
    <location>
        <begin position="1"/>
        <end position="250"/>
    </location>
</feature>
<reference key="1">
    <citation type="journal article" date="2004" name="Proc. Natl. Acad. Sci. U.S.A.">
        <title>Complete genomes of two clinical Staphylococcus aureus strains: evidence for the rapid evolution of virulence and drug resistance.</title>
        <authorList>
            <person name="Holden M.T.G."/>
            <person name="Feil E.J."/>
            <person name="Lindsay J.A."/>
            <person name="Peacock S.J."/>
            <person name="Day N.P.J."/>
            <person name="Enright M.C."/>
            <person name="Foster T.J."/>
            <person name="Moore C.E."/>
            <person name="Hurst L."/>
            <person name="Atkin R."/>
            <person name="Barron A."/>
            <person name="Bason N."/>
            <person name="Bentley S.D."/>
            <person name="Chillingworth C."/>
            <person name="Chillingworth T."/>
            <person name="Churcher C."/>
            <person name="Clark L."/>
            <person name="Corton C."/>
            <person name="Cronin A."/>
            <person name="Doggett J."/>
            <person name="Dowd L."/>
            <person name="Feltwell T."/>
            <person name="Hance Z."/>
            <person name="Harris B."/>
            <person name="Hauser H."/>
            <person name="Holroyd S."/>
            <person name="Jagels K."/>
            <person name="James K.D."/>
            <person name="Lennard N."/>
            <person name="Line A."/>
            <person name="Mayes R."/>
            <person name="Moule S."/>
            <person name="Mungall K."/>
            <person name="Ormond D."/>
            <person name="Quail M.A."/>
            <person name="Rabbinowitsch E."/>
            <person name="Rutherford K.M."/>
            <person name="Sanders M."/>
            <person name="Sharp S."/>
            <person name="Simmonds M."/>
            <person name="Stevens K."/>
            <person name="Whitehead S."/>
            <person name="Barrell B.G."/>
            <person name="Spratt B.G."/>
            <person name="Parkhill J."/>
        </authorList>
    </citation>
    <scope>NUCLEOTIDE SEQUENCE [LARGE SCALE GENOMIC DNA]</scope>
    <source>
        <strain>MRSA252</strain>
    </source>
</reference>
<name>PXPA_STAAR</name>